<dbReference type="EMBL" id="AF114168">
    <property type="protein sequence ID" value="AAD22194.2"/>
    <property type="molecule type" value="mRNA"/>
</dbReference>
<dbReference type="EMBL" id="AF008649">
    <property type="protein sequence ID" value="AAG29338.1"/>
    <property type="molecule type" value="mRNA"/>
</dbReference>
<dbReference type="EMBL" id="AF120255">
    <property type="protein sequence ID" value="AAG29341.1"/>
    <property type="molecule type" value="mRNA"/>
</dbReference>
<dbReference type="EMBL" id="AL078630">
    <property type="status" value="NOT_ANNOTATED_CDS"/>
    <property type="molecule type" value="Genomic_DNA"/>
</dbReference>
<dbReference type="EMBL" id="BC054735">
    <property type="protein sequence ID" value="AAH54735.1"/>
    <property type="molecule type" value="mRNA"/>
</dbReference>
<dbReference type="EMBL" id="BC056990">
    <property type="protein sequence ID" value="AAH56990.1"/>
    <property type="molecule type" value="mRNA"/>
</dbReference>
<dbReference type="CCDS" id="CCDS37616.1">
    <molecule id="Q9WV18-1"/>
</dbReference>
<dbReference type="RefSeq" id="NP_062312.3">
    <molecule id="Q9WV18-1"/>
    <property type="nucleotide sequence ID" value="NM_019439.3"/>
</dbReference>
<dbReference type="RefSeq" id="XP_030105768.1">
    <molecule id="Q9WV18-2"/>
    <property type="nucleotide sequence ID" value="XM_030249908.1"/>
</dbReference>
<dbReference type="SMR" id="Q9WV18"/>
<dbReference type="BioGRID" id="207643">
    <property type="interactions" value="11"/>
</dbReference>
<dbReference type="ComplexPortal" id="CPX-2990">
    <property type="entry name" value="GABA-B receptor complex"/>
</dbReference>
<dbReference type="FunCoup" id="Q9WV18">
    <property type="interactions" value="1487"/>
</dbReference>
<dbReference type="IntAct" id="Q9WV18">
    <property type="interactions" value="4"/>
</dbReference>
<dbReference type="MINT" id="Q9WV18"/>
<dbReference type="STRING" id="10090.ENSMUSP00000025338"/>
<dbReference type="GlyConnect" id="2328">
    <property type="glycosylation" value="9 N-Linked glycans (5 sites)"/>
</dbReference>
<dbReference type="GlyCosmos" id="Q9WV18">
    <property type="glycosylation" value="8 sites, 8 glycans"/>
</dbReference>
<dbReference type="GlyGen" id="Q9WV18">
    <property type="glycosylation" value="9 sites, 12 N-linked glycans (7 sites), 1 O-linked glycan (1 site)"/>
</dbReference>
<dbReference type="iPTMnet" id="Q9WV18"/>
<dbReference type="PhosphoSitePlus" id="Q9WV18"/>
<dbReference type="SwissPalm" id="Q9WV18"/>
<dbReference type="jPOST" id="Q9WV18"/>
<dbReference type="PaxDb" id="10090-ENSMUSP00000025338"/>
<dbReference type="PeptideAtlas" id="Q9WV18"/>
<dbReference type="ProteomicsDB" id="273410">
    <molecule id="Q9WV18-1"/>
</dbReference>
<dbReference type="ProteomicsDB" id="273411">
    <molecule id="Q9WV18-2"/>
</dbReference>
<dbReference type="Pumba" id="Q9WV18"/>
<dbReference type="ABCD" id="Q9WV18">
    <property type="antibodies" value="1 sequenced antibody"/>
</dbReference>
<dbReference type="Antibodypedia" id="50418">
    <property type="antibodies" value="553 antibodies from 43 providers"/>
</dbReference>
<dbReference type="DNASU" id="54393"/>
<dbReference type="Ensembl" id="ENSMUST00000025338.16">
    <molecule id="Q9WV18-1"/>
    <property type="protein sequence ID" value="ENSMUSP00000025338.10"/>
    <property type="gene ID" value="ENSMUSG00000024462.18"/>
</dbReference>
<dbReference type="Ensembl" id="ENSMUST00000172792.8">
    <molecule id="Q9WV18-2"/>
    <property type="protein sequence ID" value="ENSMUSP00000134268.2"/>
    <property type="gene ID" value="ENSMUSG00000024462.18"/>
</dbReference>
<dbReference type="GeneID" id="54393"/>
<dbReference type="KEGG" id="mmu:54393"/>
<dbReference type="UCSC" id="uc008cma.1">
    <molecule id="Q9WV18-1"/>
    <property type="organism name" value="mouse"/>
</dbReference>
<dbReference type="UCSC" id="uc008cmd.1">
    <molecule id="Q9WV18-2"/>
    <property type="organism name" value="mouse"/>
</dbReference>
<dbReference type="AGR" id="MGI:1860139"/>
<dbReference type="CTD" id="2550"/>
<dbReference type="MGI" id="MGI:1860139">
    <property type="gene designation" value="Gabbr1"/>
</dbReference>
<dbReference type="VEuPathDB" id="HostDB:ENSMUSG00000024462"/>
<dbReference type="eggNOG" id="KOG1055">
    <property type="taxonomic scope" value="Eukaryota"/>
</dbReference>
<dbReference type="GeneTree" id="ENSGT00940000157642"/>
<dbReference type="HOGENOM" id="CLU_005240_2_0_1"/>
<dbReference type="InParanoid" id="Q9WV18"/>
<dbReference type="OMA" id="WAGGEAC"/>
<dbReference type="OrthoDB" id="17569at2759"/>
<dbReference type="PhylomeDB" id="Q9WV18"/>
<dbReference type="TreeFam" id="TF313965"/>
<dbReference type="Reactome" id="R-MMU-1296041">
    <property type="pathway name" value="Activation of G protein gated Potassium channels"/>
</dbReference>
<dbReference type="Reactome" id="R-MMU-418594">
    <property type="pathway name" value="G alpha (i) signalling events"/>
</dbReference>
<dbReference type="Reactome" id="R-MMU-420499">
    <property type="pathway name" value="Class C/3 (Metabotropic glutamate/pheromone receptors)"/>
</dbReference>
<dbReference type="Reactome" id="R-MMU-977444">
    <property type="pathway name" value="GABA B receptor activation"/>
</dbReference>
<dbReference type="Reactome" id="R-MMU-997272">
    <property type="pathway name" value="Inhibition of voltage gated Ca2+ channels via Gbeta/gamma subunits"/>
</dbReference>
<dbReference type="BioGRID-ORCS" id="54393">
    <property type="hits" value="3 hits in 80 CRISPR screens"/>
</dbReference>
<dbReference type="CD-CODE" id="CE726F99">
    <property type="entry name" value="Postsynaptic density"/>
</dbReference>
<dbReference type="ChiTaRS" id="Gabbr1">
    <property type="organism name" value="mouse"/>
</dbReference>
<dbReference type="PRO" id="PR:Q9WV18"/>
<dbReference type="Proteomes" id="UP000000589">
    <property type="component" value="Chromosome 17"/>
</dbReference>
<dbReference type="RNAct" id="Q9WV18">
    <property type="molecule type" value="protein"/>
</dbReference>
<dbReference type="Bgee" id="ENSMUSG00000024462">
    <property type="expression patterns" value="Expressed in habenula and 256 other cell types or tissues"/>
</dbReference>
<dbReference type="ExpressionAtlas" id="Q9WV18">
    <property type="expression patterns" value="baseline and differential"/>
</dbReference>
<dbReference type="GO" id="GO:0030673">
    <property type="term" value="C:axolemma"/>
    <property type="evidence" value="ECO:0007669"/>
    <property type="project" value="Ensembl"/>
</dbReference>
<dbReference type="GO" id="GO:0005737">
    <property type="term" value="C:cytoplasm"/>
    <property type="evidence" value="ECO:0000314"/>
    <property type="project" value="MGI"/>
</dbReference>
<dbReference type="GO" id="GO:0043198">
    <property type="term" value="C:dendritic shaft"/>
    <property type="evidence" value="ECO:0007669"/>
    <property type="project" value="Ensembl"/>
</dbReference>
<dbReference type="GO" id="GO:0043197">
    <property type="term" value="C:dendritic spine"/>
    <property type="evidence" value="ECO:0007669"/>
    <property type="project" value="Ensembl"/>
</dbReference>
<dbReference type="GO" id="GO:0005789">
    <property type="term" value="C:endoplasmic reticulum membrane"/>
    <property type="evidence" value="ECO:0007669"/>
    <property type="project" value="Ensembl"/>
</dbReference>
<dbReference type="GO" id="GO:0005615">
    <property type="term" value="C:extracellular space"/>
    <property type="evidence" value="ECO:0007669"/>
    <property type="project" value="Ensembl"/>
</dbReference>
<dbReference type="GO" id="GO:1902712">
    <property type="term" value="C:G protein-coupled GABA receptor complex"/>
    <property type="evidence" value="ECO:0000266"/>
    <property type="project" value="ComplexPortal"/>
</dbReference>
<dbReference type="GO" id="GO:0038037">
    <property type="term" value="C:G protein-coupled receptor dimeric complex"/>
    <property type="evidence" value="ECO:0000314"/>
    <property type="project" value="MGI"/>
</dbReference>
<dbReference type="GO" id="GO:0038039">
    <property type="term" value="C:G protein-coupled receptor heterodimeric complex"/>
    <property type="evidence" value="ECO:0000250"/>
    <property type="project" value="UniProtKB"/>
</dbReference>
<dbReference type="GO" id="GO:0098982">
    <property type="term" value="C:GABA-ergic synapse"/>
    <property type="evidence" value="ECO:0000314"/>
    <property type="project" value="SynGO"/>
</dbReference>
<dbReference type="GO" id="GO:0098978">
    <property type="term" value="C:glutamatergic synapse"/>
    <property type="evidence" value="ECO:0007669"/>
    <property type="project" value="Ensembl"/>
</dbReference>
<dbReference type="GO" id="GO:0016020">
    <property type="term" value="C:membrane"/>
    <property type="evidence" value="ECO:0000314"/>
    <property type="project" value="MGI"/>
</dbReference>
<dbReference type="GO" id="GO:0031966">
    <property type="term" value="C:mitochondrial membrane"/>
    <property type="evidence" value="ECO:0007669"/>
    <property type="project" value="Ensembl"/>
</dbReference>
<dbReference type="GO" id="GO:0043025">
    <property type="term" value="C:neuronal cell body"/>
    <property type="evidence" value="ECO:0007669"/>
    <property type="project" value="Ensembl"/>
</dbReference>
<dbReference type="GO" id="GO:0005886">
    <property type="term" value="C:plasma membrane"/>
    <property type="evidence" value="ECO:0000250"/>
    <property type="project" value="UniProtKB"/>
</dbReference>
<dbReference type="GO" id="GO:0045211">
    <property type="term" value="C:postsynaptic membrane"/>
    <property type="evidence" value="ECO:0000314"/>
    <property type="project" value="MGI"/>
</dbReference>
<dbReference type="GO" id="GO:0098793">
    <property type="term" value="C:presynapse"/>
    <property type="evidence" value="ECO:0000314"/>
    <property type="project" value="ParkinsonsUK-UCL"/>
</dbReference>
<dbReference type="GO" id="GO:0042734">
    <property type="term" value="C:presynaptic membrane"/>
    <property type="evidence" value="ECO:0000314"/>
    <property type="project" value="MGI"/>
</dbReference>
<dbReference type="GO" id="GO:0098685">
    <property type="term" value="C:Schaffer collateral - CA1 synapse"/>
    <property type="evidence" value="ECO:0000314"/>
    <property type="project" value="SynGO"/>
</dbReference>
<dbReference type="GO" id="GO:0008021">
    <property type="term" value="C:synaptic vesicle"/>
    <property type="evidence" value="ECO:0007669"/>
    <property type="project" value="Ensembl"/>
</dbReference>
<dbReference type="GO" id="GO:1990430">
    <property type="term" value="F:extracellular matrix protein binding"/>
    <property type="evidence" value="ECO:0007669"/>
    <property type="project" value="Ensembl"/>
</dbReference>
<dbReference type="GO" id="GO:0004965">
    <property type="term" value="F:G protein-coupled GABA receptor activity"/>
    <property type="evidence" value="ECO:0000250"/>
    <property type="project" value="UniProtKB"/>
</dbReference>
<dbReference type="GO" id="GO:0099579">
    <property type="term" value="F:G protein-coupled neurotransmitter receptor activity involved in regulation of postsynaptic membrane potential"/>
    <property type="evidence" value="ECO:0000314"/>
    <property type="project" value="SynGO"/>
</dbReference>
<dbReference type="GO" id="GO:0150047">
    <property type="term" value="F:G protein-coupled neurotransmitter receptor activity involved in regulation of presynaptic membrane potential"/>
    <property type="evidence" value="ECO:0000314"/>
    <property type="project" value="SynGO"/>
</dbReference>
<dbReference type="GO" id="GO:0046982">
    <property type="term" value="F:protein heterodimerization activity"/>
    <property type="evidence" value="ECO:0007669"/>
    <property type="project" value="Ensembl"/>
</dbReference>
<dbReference type="GO" id="GO:0007193">
    <property type="term" value="P:adenylate cyclase-inhibiting G protein-coupled receptor signaling pathway"/>
    <property type="evidence" value="ECO:0000250"/>
    <property type="project" value="UniProtKB"/>
</dbReference>
<dbReference type="GO" id="GO:0007214">
    <property type="term" value="P:gamma-aminobutyric acid signaling pathway"/>
    <property type="evidence" value="ECO:0000314"/>
    <property type="project" value="MGI"/>
</dbReference>
<dbReference type="GO" id="GO:0008285">
    <property type="term" value="P:negative regulation of cell population proliferation"/>
    <property type="evidence" value="ECO:0007669"/>
    <property type="project" value="Ensembl"/>
</dbReference>
<dbReference type="GO" id="GO:0033602">
    <property type="term" value="P:negative regulation of dopamine secretion"/>
    <property type="evidence" value="ECO:0007669"/>
    <property type="project" value="Ensembl"/>
</dbReference>
<dbReference type="GO" id="GO:0032811">
    <property type="term" value="P:negative regulation of epinephrine secretion"/>
    <property type="evidence" value="ECO:0007669"/>
    <property type="project" value="Ensembl"/>
</dbReference>
<dbReference type="GO" id="GO:0014053">
    <property type="term" value="P:negative regulation of gamma-aminobutyric acid secretion"/>
    <property type="evidence" value="ECO:0007669"/>
    <property type="project" value="Ensembl"/>
</dbReference>
<dbReference type="GO" id="GO:0050805">
    <property type="term" value="P:negative regulation of synaptic transmission"/>
    <property type="evidence" value="ECO:0007669"/>
    <property type="project" value="Ensembl"/>
</dbReference>
<dbReference type="GO" id="GO:0150099">
    <property type="term" value="P:neuron-glial cell signaling"/>
    <property type="evidence" value="ECO:0007669"/>
    <property type="project" value="Ensembl"/>
</dbReference>
<dbReference type="GO" id="GO:0001649">
    <property type="term" value="P:osteoblast differentiation"/>
    <property type="evidence" value="ECO:0007669"/>
    <property type="project" value="Ensembl"/>
</dbReference>
<dbReference type="GO" id="GO:0014049">
    <property type="term" value="P:positive regulation of glutamate secretion"/>
    <property type="evidence" value="ECO:0007669"/>
    <property type="project" value="Ensembl"/>
</dbReference>
<dbReference type="GO" id="GO:0060124">
    <property type="term" value="P:positive regulation of growth hormone secretion"/>
    <property type="evidence" value="ECO:0007669"/>
    <property type="project" value="Ensembl"/>
</dbReference>
<dbReference type="GO" id="GO:0045471">
    <property type="term" value="P:response to ethanol"/>
    <property type="evidence" value="ECO:0007669"/>
    <property type="project" value="Ensembl"/>
</dbReference>
<dbReference type="GO" id="GO:0035094">
    <property type="term" value="P:response to nicotine"/>
    <property type="evidence" value="ECO:0007669"/>
    <property type="project" value="Ensembl"/>
</dbReference>
<dbReference type="GO" id="GO:0051932">
    <property type="term" value="P:synaptic transmission, GABAergic"/>
    <property type="evidence" value="ECO:0000303"/>
    <property type="project" value="ComplexPortal"/>
</dbReference>
<dbReference type="CDD" id="cd15291">
    <property type="entry name" value="7tmC_GABA-B-R1"/>
    <property type="match status" value="1"/>
</dbReference>
<dbReference type="CDD" id="cd00033">
    <property type="entry name" value="CCP"/>
    <property type="match status" value="1"/>
</dbReference>
<dbReference type="CDD" id="cd06366">
    <property type="entry name" value="PBP1_GABAb_receptor"/>
    <property type="match status" value="1"/>
</dbReference>
<dbReference type="FunFam" id="3.40.50.2300:FF:000055">
    <property type="entry name" value="Gamma-aminobutyric acid type B receptor subunit 1"/>
    <property type="match status" value="1"/>
</dbReference>
<dbReference type="FunFam" id="2.10.70.10:FF:000031">
    <property type="entry name" value="gamma-aminobutyric acid type B receptor subunit 1"/>
    <property type="match status" value="1"/>
</dbReference>
<dbReference type="FunFam" id="3.40.50.2300:FF:000072">
    <property type="entry name" value="Gamma-aminobutyric acid type B receptor subunit 2"/>
    <property type="match status" value="1"/>
</dbReference>
<dbReference type="Gene3D" id="3.40.50.2300">
    <property type="match status" value="2"/>
</dbReference>
<dbReference type="Gene3D" id="2.10.70.10">
    <property type="entry name" value="Complement Module, domain 1"/>
    <property type="match status" value="1"/>
</dbReference>
<dbReference type="InterPro" id="IPR001828">
    <property type="entry name" value="ANF_lig-bd_rcpt"/>
</dbReference>
<dbReference type="InterPro" id="IPR002455">
    <property type="entry name" value="GPCR3_GABA-B"/>
</dbReference>
<dbReference type="InterPro" id="IPR017978">
    <property type="entry name" value="GPCR_3_C"/>
</dbReference>
<dbReference type="InterPro" id="IPR002456">
    <property type="entry name" value="GPCR_3_GABA_rcpt_B1"/>
</dbReference>
<dbReference type="InterPro" id="IPR028082">
    <property type="entry name" value="Peripla_BP_I"/>
</dbReference>
<dbReference type="InterPro" id="IPR035976">
    <property type="entry name" value="Sushi/SCR/CCP_sf"/>
</dbReference>
<dbReference type="InterPro" id="IPR000436">
    <property type="entry name" value="Sushi_SCR_CCP_dom"/>
</dbReference>
<dbReference type="PANTHER" id="PTHR10519">
    <property type="entry name" value="GABA-B RECEPTOR"/>
    <property type="match status" value="1"/>
</dbReference>
<dbReference type="PANTHER" id="PTHR10519:SF77">
    <property type="entry name" value="GAMMA-AMINOBUTYRIC ACID TYPE B RECEPTOR SUBUNIT 1"/>
    <property type="match status" value="1"/>
</dbReference>
<dbReference type="Pfam" id="PF00003">
    <property type="entry name" value="7tm_3"/>
    <property type="match status" value="1"/>
</dbReference>
<dbReference type="Pfam" id="PF01094">
    <property type="entry name" value="ANF_receptor"/>
    <property type="match status" value="1"/>
</dbReference>
<dbReference type="Pfam" id="PF00084">
    <property type="entry name" value="Sushi"/>
    <property type="match status" value="1"/>
</dbReference>
<dbReference type="PRINTS" id="PR01177">
    <property type="entry name" value="GABAB1RECPTR"/>
</dbReference>
<dbReference type="PRINTS" id="PR01176">
    <property type="entry name" value="GABABRECEPTR"/>
</dbReference>
<dbReference type="SMART" id="SM00032">
    <property type="entry name" value="CCP"/>
    <property type="match status" value="2"/>
</dbReference>
<dbReference type="SUPFAM" id="SSF57535">
    <property type="entry name" value="Complement control module/SCR domain"/>
    <property type="match status" value="2"/>
</dbReference>
<dbReference type="SUPFAM" id="SSF53822">
    <property type="entry name" value="Periplasmic binding protein-like I"/>
    <property type="match status" value="1"/>
</dbReference>
<dbReference type="PROSITE" id="PS50259">
    <property type="entry name" value="G_PROTEIN_RECEP_F3_4"/>
    <property type="match status" value="1"/>
</dbReference>
<dbReference type="PROSITE" id="PS50923">
    <property type="entry name" value="SUSHI"/>
    <property type="match status" value="1"/>
</dbReference>
<keyword id="KW-0025">Alternative splicing</keyword>
<keyword id="KW-1003">Cell membrane</keyword>
<keyword id="KW-0966">Cell projection</keyword>
<keyword id="KW-0175">Coiled coil</keyword>
<keyword id="KW-1015">Disulfide bond</keyword>
<keyword id="KW-0297">G-protein coupled receptor</keyword>
<keyword id="KW-0325">Glycoprotein</keyword>
<keyword id="KW-0472">Membrane</keyword>
<keyword id="KW-0597">Phosphoprotein</keyword>
<keyword id="KW-0628">Postsynaptic cell membrane</keyword>
<keyword id="KW-0675">Receptor</keyword>
<keyword id="KW-1185">Reference proteome</keyword>
<keyword id="KW-0677">Repeat</keyword>
<keyword id="KW-0732">Signal</keyword>
<keyword id="KW-0768">Sushi</keyword>
<keyword id="KW-0770">Synapse</keyword>
<keyword id="KW-0807">Transducer</keyword>
<keyword id="KW-0812">Transmembrane</keyword>
<keyword id="KW-1133">Transmembrane helix</keyword>
<accession>Q9WV18</accession>
<accession>Q6PGJ2</accession>
<accession>Q9WU48</accession>
<accession>Q9WV15</accession>
<accession>Q9WV16</accession>
<accession>Q9WV17</accession>
<protein>
    <recommendedName>
        <fullName>Gamma-aminobutyric acid type B receptor subunit 1</fullName>
        <shortName>GABA-B receptor 1</shortName>
        <shortName>GABA-B-R1</shortName>
        <shortName>GABA-BR1</shortName>
        <shortName>GABABR1</shortName>
        <shortName>Gb1</shortName>
    </recommendedName>
</protein>
<proteinExistence type="evidence at protein level"/>
<name>GABR1_MOUSE</name>
<evidence type="ECO:0000250" key="1"/>
<evidence type="ECO:0000250" key="2">
    <source>
        <dbReference type="UniProtKB" id="Q9UBS5"/>
    </source>
</evidence>
<evidence type="ECO:0000250" key="3">
    <source>
        <dbReference type="UniProtKB" id="Q9Z0U4"/>
    </source>
</evidence>
<evidence type="ECO:0000255" key="4"/>
<evidence type="ECO:0000255" key="5">
    <source>
        <dbReference type="PROSITE-ProRule" id="PRU00302"/>
    </source>
</evidence>
<evidence type="ECO:0000256" key="6">
    <source>
        <dbReference type="SAM" id="MobiDB-lite"/>
    </source>
</evidence>
<evidence type="ECO:0000269" key="7">
    <source>
    </source>
</evidence>
<evidence type="ECO:0000269" key="8">
    <source>
    </source>
</evidence>
<evidence type="ECO:0000269" key="9">
    <source>
    </source>
</evidence>
<evidence type="ECO:0000269" key="10">
    <source>
    </source>
</evidence>
<evidence type="ECO:0000269" key="11">
    <source>
    </source>
</evidence>
<evidence type="ECO:0000269" key="12">
    <source>
    </source>
</evidence>
<evidence type="ECO:0000303" key="13">
    <source>
    </source>
</evidence>
<evidence type="ECO:0000303" key="14">
    <source>
    </source>
</evidence>
<evidence type="ECO:0000305" key="15"/>
<evidence type="ECO:0007744" key="16">
    <source>
    </source>
</evidence>
<reference key="1">
    <citation type="journal article" date="2000" name="J. Pharmacol. Exp. Ther.">
        <title>Coexpression of full-length gamma-aminobutyric acid(B) (GABA(B)) receptors with truncated receptors and metabotropic glutamate receptor 4 supports the GABA(B) heterodimer as the functional receptor.</title>
        <authorList>
            <person name="Sullivan R."/>
            <person name="Chateauneuf A."/>
            <person name="Coulombe N."/>
            <person name="Kolakowski L.F. Jr."/>
            <person name="Johnson M.P."/>
            <person name="Hebert T.E."/>
            <person name="Ethier N."/>
            <person name="Belley M."/>
            <person name="Metters K."/>
            <person name="Abramovitz M."/>
            <person name="O'Neill G.P."/>
            <person name="Ng G.Y.K."/>
        </authorList>
    </citation>
    <scope>NUCLEOTIDE SEQUENCE [MRNA] (ISOFORM 1A)</scope>
    <scope>FUNCTION</scope>
    <scope>INTERACTION WITH GABBR2</scope>
    <scope>SUBCELLULAR LOCATION</scope>
</reference>
<reference key="2">
    <citation type="journal article" date="2001" name="Cytogenet. Cell Genet.">
        <title>The murine GABA(B) receptor 1: cDNA cloning, tissue distribution, structure of the Gabbr1 gene, and mapping to chromosome 17.</title>
        <authorList>
            <person name="Lamp K."/>
            <person name="Humeny A."/>
            <person name="Nikolic Z."/>
            <person name="Imai K."/>
            <person name="Adamski J."/>
            <person name="Schiebel K."/>
            <person name="Becker C.M."/>
        </authorList>
    </citation>
    <scope>NUCLEOTIDE SEQUENCE [MRNA] (ISOFORMS 1A AND 1B)</scope>
    <scope>TISSUE SPECIFICITY</scope>
</reference>
<reference key="3">
    <citation type="journal article" date="2009" name="PLoS Biol.">
        <title>Lineage-specific biology revealed by a finished genome assembly of the mouse.</title>
        <authorList>
            <person name="Church D.M."/>
            <person name="Goodstadt L."/>
            <person name="Hillier L.W."/>
            <person name="Zody M.C."/>
            <person name="Goldstein S."/>
            <person name="She X."/>
            <person name="Bult C.J."/>
            <person name="Agarwala R."/>
            <person name="Cherry J.L."/>
            <person name="DiCuccio M."/>
            <person name="Hlavina W."/>
            <person name="Kapustin Y."/>
            <person name="Meric P."/>
            <person name="Maglott D."/>
            <person name="Birtle Z."/>
            <person name="Marques A.C."/>
            <person name="Graves T."/>
            <person name="Zhou S."/>
            <person name="Teague B."/>
            <person name="Potamousis K."/>
            <person name="Churas C."/>
            <person name="Place M."/>
            <person name="Herschleb J."/>
            <person name="Runnheim R."/>
            <person name="Forrest D."/>
            <person name="Amos-Landgraf J."/>
            <person name="Schwartz D.C."/>
            <person name="Cheng Z."/>
            <person name="Lindblad-Toh K."/>
            <person name="Eichler E.E."/>
            <person name="Ponting C.P."/>
        </authorList>
    </citation>
    <scope>NUCLEOTIDE SEQUENCE [LARGE SCALE GENOMIC DNA]</scope>
    <source>
        <strain>C57BL/6J</strain>
    </source>
</reference>
<reference key="4">
    <citation type="journal article" date="2004" name="Genome Res.">
        <title>The status, quality, and expansion of the NIH full-length cDNA project: the Mammalian Gene Collection (MGC).</title>
        <authorList>
            <consortium name="The MGC Project Team"/>
        </authorList>
    </citation>
    <scope>NUCLEOTIDE SEQUENCE [LARGE SCALE MRNA] (ISOFORMS 1A AND 1B)</scope>
    <source>
        <strain>C57BL/6J</strain>
        <tissue evidence="14">Brain</tissue>
    </source>
</reference>
<reference key="5">
    <citation type="journal article" date="1999" name="J. Biol. Chem.">
        <title>Identification of a GABAB receptor subunit, gb2, required for functional GABAB receptor activity.</title>
        <authorList>
            <person name="Ng G.Y.K."/>
            <person name="Clark J."/>
            <person name="Coulombe N."/>
            <person name="Ethier N."/>
            <person name="Hebert T.E."/>
            <person name="Sullivan R."/>
            <person name="Kargman S."/>
            <person name="Chateauneuf A."/>
            <person name="Tsukamoto N."/>
            <person name="McDonald T."/>
            <person name="Whiting P."/>
            <person name="Mezey E."/>
            <person name="Johnson M.P."/>
            <person name="Liu Q."/>
            <person name="Kolakowski L.F. Jr."/>
            <person name="Evans J.F."/>
            <person name="Bonner T.I."/>
            <person name="O'Neill G.P."/>
        </authorList>
    </citation>
    <scope>FUNCTION</scope>
    <scope>INTERACTION WITH GABBR2</scope>
</reference>
<reference key="6">
    <citation type="journal article" date="1999" name="Science">
        <title>Role of heteromer formation in GABAB receptor function.</title>
        <authorList>
            <person name="Kuner R."/>
            <person name="Koehr G."/>
            <person name="Gruenewald S."/>
            <person name="Eisenhardt G."/>
            <person name="Bach A."/>
            <person name="Kornau H.-C."/>
        </authorList>
    </citation>
    <scope>INTERACTION WITH GABBR2</scope>
</reference>
<reference key="7">
    <citation type="journal article" date="2004" name="J. Biol. Chem.">
        <title>Marlin-1, a novel RNA-binding protein associates with GABA receptors.</title>
        <authorList>
            <person name="Couve A."/>
            <person name="Restituito S."/>
            <person name="Brandon J.M."/>
            <person name="Charles K.J."/>
            <person name="Bawagan H."/>
            <person name="Freeman K.B."/>
            <person name="Pangalos M.N."/>
            <person name="Calver A.R."/>
            <person name="Moss S.J."/>
        </authorList>
    </citation>
    <scope>INTERACTION WITH JAKMIP1</scope>
</reference>
<reference key="8">
    <citation type="journal article" date="2010" name="Cell">
        <title>A tissue-specific atlas of mouse protein phosphorylation and expression.</title>
        <authorList>
            <person name="Huttlin E.L."/>
            <person name="Jedrychowski M.P."/>
            <person name="Elias J.E."/>
            <person name="Goswami T."/>
            <person name="Rad R."/>
            <person name="Beausoleil S.A."/>
            <person name="Villen J."/>
            <person name="Haas W."/>
            <person name="Sowa M.E."/>
            <person name="Gygi S.P."/>
        </authorList>
    </citation>
    <scope>PHOSPHORYLATION [LARGE SCALE ANALYSIS] AT THR-872 AND THR-929</scope>
    <scope>IDENTIFICATION BY MASS SPECTROMETRY [LARGE SCALE ANALYSIS]</scope>
    <source>
        <tissue>Brain</tissue>
    </source>
</reference>
<reference key="9">
    <citation type="journal article" date="2010" name="Nature">
        <title>Native GABA(B) receptors are heteromultimers with a family of auxiliary subunits.</title>
        <authorList>
            <person name="Schwenk J."/>
            <person name="Metz M."/>
            <person name="Zolles G."/>
            <person name="Turecek R."/>
            <person name="Fritzius T."/>
            <person name="Bildl W."/>
            <person name="Tarusawa E."/>
            <person name="Kulik A."/>
            <person name="Unger A."/>
            <person name="Ivankova K."/>
            <person name="Seddik R."/>
            <person name="Tiao J.Y."/>
            <person name="Rajalu M."/>
            <person name="Trojanova J."/>
            <person name="Rohde V."/>
            <person name="Gassmann M."/>
            <person name="Schulte U."/>
            <person name="Fakler B."/>
            <person name="Bettler B."/>
        </authorList>
    </citation>
    <scope>INTERACTION WITH KCTD8; KCTD12; KCTD12B AND KCTD16</scope>
    <scope>FUNCTION</scope>
    <scope>SUBCELLULAR LOCATION</scope>
</reference>
<feature type="signal peptide" evidence="4">
    <location>
        <begin position="1"/>
        <end position="19"/>
    </location>
</feature>
<feature type="chain" id="PRO_0000012950" description="Gamma-aminobutyric acid type B receptor subunit 1">
    <location>
        <begin position="20"/>
        <end position="960"/>
    </location>
</feature>
<feature type="topological domain" description="Extracellular" evidence="4">
    <location>
        <begin position="20"/>
        <end position="590"/>
    </location>
</feature>
<feature type="transmembrane region" description="Helical; Name=1" evidence="4">
    <location>
        <begin position="591"/>
        <end position="611"/>
    </location>
</feature>
<feature type="topological domain" description="Cytoplasmic" evidence="4">
    <location>
        <begin position="612"/>
        <end position="630"/>
    </location>
</feature>
<feature type="transmembrane region" description="Helical; Name=2" evidence="4">
    <location>
        <begin position="631"/>
        <end position="651"/>
    </location>
</feature>
<feature type="topological domain" description="Extracellular" evidence="4">
    <location>
        <begin position="652"/>
        <end position="666"/>
    </location>
</feature>
<feature type="transmembrane region" description="Helical; Name=3" evidence="4">
    <location>
        <begin position="667"/>
        <end position="687"/>
    </location>
</feature>
<feature type="topological domain" description="Cytoplasmic" evidence="4">
    <location>
        <begin position="688"/>
        <end position="709"/>
    </location>
</feature>
<feature type="transmembrane region" description="Helical; Name=4" evidence="4">
    <location>
        <begin position="710"/>
        <end position="730"/>
    </location>
</feature>
<feature type="topological domain" description="Extracellular" evidence="4">
    <location>
        <begin position="731"/>
        <end position="767"/>
    </location>
</feature>
<feature type="transmembrane region" description="Helical; Name=5" evidence="4">
    <location>
        <begin position="768"/>
        <end position="788"/>
    </location>
</feature>
<feature type="topological domain" description="Cytoplasmic" evidence="4">
    <location>
        <begin position="789"/>
        <end position="803"/>
    </location>
</feature>
<feature type="transmembrane region" description="Helical; Name=6" evidence="4">
    <location>
        <begin position="804"/>
        <end position="824"/>
    </location>
</feature>
<feature type="topological domain" description="Extracellular" evidence="4">
    <location>
        <begin position="825"/>
        <end position="832"/>
    </location>
</feature>
<feature type="transmembrane region" description="Helical; Name=7" evidence="4">
    <location>
        <begin position="833"/>
        <end position="853"/>
    </location>
</feature>
<feature type="topological domain" description="Cytoplasmic" evidence="4">
    <location>
        <begin position="854"/>
        <end position="960"/>
    </location>
</feature>
<feature type="domain" description="Sushi 1" evidence="4">
    <location>
        <begin position="29"/>
        <end position="95"/>
    </location>
</feature>
<feature type="domain" description="Sushi 2" evidence="5">
    <location>
        <begin position="97"/>
        <end position="158"/>
    </location>
</feature>
<feature type="region of interest" description="Disordered" evidence="6">
    <location>
        <begin position="866"/>
        <end position="891"/>
    </location>
</feature>
<feature type="region of interest" description="Interaction with ATF4" evidence="1">
    <location>
        <begin position="887"/>
        <end position="915"/>
    </location>
</feature>
<feature type="region of interest" description="Disordered" evidence="6">
    <location>
        <begin position="908"/>
        <end position="960"/>
    </location>
</feature>
<feature type="coiled-coil region" evidence="4">
    <location>
        <begin position="868"/>
        <end position="924"/>
    </location>
</feature>
<feature type="compositionally biased region" description="Polar residues" evidence="6">
    <location>
        <begin position="867"/>
        <end position="879"/>
    </location>
</feature>
<feature type="binding site" evidence="2">
    <location>
        <position position="246"/>
    </location>
    <ligand>
        <name>4-aminobutanoate</name>
        <dbReference type="ChEBI" id="CHEBI:59888"/>
        <note>agonist</note>
    </ligand>
</feature>
<feature type="binding site" evidence="2">
    <location>
        <position position="269"/>
    </location>
    <ligand>
        <name>4-aminobutanoate</name>
        <dbReference type="ChEBI" id="CHEBI:59888"/>
        <note>agonist</note>
    </ligand>
</feature>
<feature type="binding site" evidence="2">
    <location>
        <position position="286"/>
    </location>
    <ligand>
        <name>4-aminobutanoate</name>
        <dbReference type="ChEBI" id="CHEBI:59888"/>
        <note>agonist</note>
    </ligand>
</feature>
<feature type="binding site" evidence="2">
    <location>
        <position position="366"/>
    </location>
    <ligand>
        <name>4-aminobutanoate</name>
        <dbReference type="ChEBI" id="CHEBI:59888"/>
        <note>agonist</note>
    </ligand>
</feature>
<feature type="binding site" evidence="2">
    <location>
        <position position="465"/>
    </location>
    <ligand>
        <name>4-aminobutanoate</name>
        <dbReference type="ChEBI" id="CHEBI:59888"/>
        <note>agonist</note>
    </ligand>
</feature>
<feature type="modified residue" description="Phosphothreonine" evidence="16">
    <location>
        <position position="872"/>
    </location>
</feature>
<feature type="modified residue" description="Phosphothreonine" evidence="16">
    <location>
        <position position="929"/>
    </location>
</feature>
<feature type="glycosylation site" description="N-linked (GlcNAc...) asparagine" evidence="4">
    <location>
        <position position="23"/>
    </location>
</feature>
<feature type="glycosylation site" description="N-linked (GlcNAc...) asparagine" evidence="4">
    <location>
        <position position="83"/>
    </location>
</feature>
<feature type="glycosylation site" description="N-linked (GlcNAc...) asparagine" evidence="4">
    <location>
        <position position="408"/>
    </location>
</feature>
<feature type="glycosylation site" description="N-linked (GlcNAc...) asparagine" evidence="4">
    <location>
        <position position="439"/>
    </location>
</feature>
<feature type="glycosylation site" description="N-linked (GlcNAc...) asparagine" evidence="4">
    <location>
        <position position="481"/>
    </location>
</feature>
<feature type="glycosylation site" description="N-linked (GlcNAc...) asparagine" evidence="4">
    <location>
        <position position="501"/>
    </location>
</feature>
<feature type="glycosylation site" description="N-linked (GlcNAc...) asparagine" evidence="4">
    <location>
        <position position="513"/>
    </location>
</feature>
<feature type="disulfide bond" evidence="5">
    <location>
        <begin position="99"/>
        <end position="144"/>
    </location>
</feature>
<feature type="disulfide bond" evidence="5">
    <location>
        <begin position="130"/>
        <end position="156"/>
    </location>
</feature>
<feature type="disulfide bond" evidence="2">
    <location>
        <begin position="219"/>
        <end position="245"/>
    </location>
</feature>
<feature type="disulfide bond" evidence="2">
    <location>
        <begin position="375"/>
        <end position="409"/>
    </location>
</feature>
<feature type="splice variant" id="VSP_002041" description="In isoform 1B." evidence="13 14">
    <original>MLLLLLVPLFLRPLGAGGAQTPNVTSEGCQIIHPPWEGGIRYRGLTRDQVKAINFLPVDYEIEYVCRGEREVVGPKVRKCLANGSWTDMDTPSRCVRICSKSYLTLENGKVFLTGGDLPALDGARVDFRCDPDFHLVGSSRSICSQGQWSTPKPHCQVNRTPH</original>
    <variation>MGPGGPCTPVGWPLPLLLVMAAGVAPVWASHSPHLPRPHPRVPPHPS</variation>
    <location>
        <begin position="1"/>
        <end position="163"/>
    </location>
</feature>
<feature type="sequence conflict" description="In Ref. 1; AAD22194." evidence="15" ref="1">
    <original>VP</original>
    <variation>LL</variation>
    <location>
        <begin position="7"/>
        <end position="8"/>
    </location>
</feature>
<feature type="sequence conflict" description="In Ref. 1; AAD22194." evidence="15" ref="1">
    <original>T</original>
    <variation>I</variation>
    <location>
        <position position="46"/>
    </location>
</feature>
<feature type="sequence conflict" description="In Ref. 1; AAD22194." evidence="15" ref="1">
    <original>V</original>
    <variation>A</variation>
    <location>
        <position position="618"/>
    </location>
</feature>
<feature type="sequence conflict" description="In Ref. 1; AAD22194." evidence="15" ref="1">
    <original>A</original>
    <variation>V</variation>
    <location>
        <position position="642"/>
    </location>
</feature>
<feature type="sequence conflict" description="In Ref. 4; AAH56990." evidence="15" ref="4">
    <original>W</original>
    <variation>R</variation>
    <location>
        <position position="700"/>
    </location>
</feature>
<feature type="sequence conflict" description="In Ref. 1; AAD22194." evidence="15" ref="1">
    <original>I</original>
    <variation>V</variation>
    <location>
        <position position="721"/>
    </location>
</feature>
<feature type="sequence conflict" description="In Ref. 2; AAG29338/AAG29341." evidence="15" ref="2">
    <original>A</original>
    <variation>P</variation>
    <location>
        <position position="812"/>
    </location>
</feature>
<feature type="sequence conflict" description="In Ref. 1; AAD22194." evidence="15" ref="1">
    <original>A</original>
    <variation>T</variation>
    <location>
        <position position="869"/>
    </location>
</feature>
<feature type="sequence conflict" description="In Ref. 1; AAD22194." evidence="15" ref="1">
    <original>I</original>
    <variation>L</variation>
    <location>
        <position position="921"/>
    </location>
</feature>
<comment type="function">
    <text evidence="2 3 7 8">Component of a heterodimeric G-protein coupled receptor for GABA, formed by GABBR1 and GABBR2 (PubMed:10075644, PubMed:10773016). Within the heterodimeric GABA receptor, only GABBR1 seems to bind agonists, while GABBR2 mediates coupling to G proteins (By similarity). Ligand binding causes a conformation change that triggers signaling via guanine nucleotide-binding proteins (G proteins) and modulates the activity of down-stream effectors, such as adenylate cyclase (PubMed:10075644, PubMed:10773016). Signaling inhibits adenylate cyclase, stimulates phospholipase A2, activates potassium channels, inactivates voltage-dependent calcium-channels and modulates inositol phospholipid hydrolysis (PubMed:10075644). Calcium is required for high affinity binding to GABA (By similarity). Plays a critical role in the fine-tuning of inhibitory synaptic transmission (By similarity). Pre-synaptic GABA receptor inhibits neurotransmitter release by down-regulating high-voltage activated calcium channels, whereas postsynaptic GABA receptor decreases neuronal excitability by activating a prominent inwardly rectifying potassium (Kir) conductance that underlies the late inhibitory postsynaptic potentials (PubMed:10075644). Not only implicated in synaptic inhibition but also in hippocampal long-term potentiation, slow wave sleep, muscle relaxation and antinociception (By similarity).</text>
</comment>
<comment type="subunit">
    <text evidence="3 7 8 10 11 12">Heterodimer of GABBR1 and GABBR2 (PubMed:10075644, PubMed:10773016, PubMed:9872744). Homodimers may form, but are inactive (By similarity). Interacts (via C-terminus) with ATF4 (via leucine zipper domain) (By similarity). Interacts with JAKMIP1 (PubMed:14718537). Interacts with KCTD8, KCTD12, KCTD12B and KCTD16; this interaction determines the pharmacology and kinetics of the receptor response, the KCTD proteins markedly accelerating the GABA-B response, although to different extents (PubMed:20400944).</text>
</comment>
<comment type="subcellular location">
    <subcellularLocation>
        <location evidence="11">Cell membrane</location>
        <topology evidence="1">Multi-pass membrane protein</topology>
    </subcellularLocation>
    <subcellularLocation>
        <location evidence="11">Postsynaptic cell membrane</location>
        <topology evidence="1">Multi-pass membrane protein</topology>
    </subcellularLocation>
    <subcellularLocation>
        <location evidence="1">Cell projection</location>
        <location evidence="1">Dendrite</location>
    </subcellularLocation>
    <text evidence="1">Coexpression of GABBR1 and GABBR2 is required for GABBR1 maturation and transport to the plasma membrane. Colocalizes with ATF4 in hippocampal neuron dendritic membranes (By similarity).</text>
</comment>
<comment type="alternative products">
    <event type="alternative splicing"/>
    <isoform>
        <id>Q9WV18-1</id>
        <name>1A</name>
        <sequence type="displayed"/>
    </isoform>
    <isoform>
        <id>Q9WV18-2</id>
        <name>1B</name>
        <sequence type="described" ref="VSP_002041"/>
    </isoform>
</comment>
<comment type="tissue specificity">
    <text evidence="9">Expressed in neuronal tissue including cortex, cerebellum and spinal cord. Not detected in non-neuronal tissues including heart, liver, spleen and kidney.</text>
</comment>
<comment type="domain">
    <text>Alpha-helical parts of the C-terminal intracellular region mediate heterodimeric interaction with GABBR2. The linker region between the transmembrane domain 3 (TM3) and the transmembrane domain 4 (TM4) probably plays a role in the specificity for G-protein coupling.</text>
</comment>
<comment type="similarity">
    <text evidence="15">Belongs to the G-protein coupled receptor 3 family. GABA-B receptor subfamily.</text>
</comment>
<gene>
    <name type="primary">Gabbr1</name>
</gene>
<organism>
    <name type="scientific">Mus musculus</name>
    <name type="common">Mouse</name>
    <dbReference type="NCBI Taxonomy" id="10090"/>
    <lineage>
        <taxon>Eukaryota</taxon>
        <taxon>Metazoa</taxon>
        <taxon>Chordata</taxon>
        <taxon>Craniata</taxon>
        <taxon>Vertebrata</taxon>
        <taxon>Euteleostomi</taxon>
        <taxon>Mammalia</taxon>
        <taxon>Eutheria</taxon>
        <taxon>Euarchontoglires</taxon>
        <taxon>Glires</taxon>
        <taxon>Rodentia</taxon>
        <taxon>Myomorpha</taxon>
        <taxon>Muroidea</taxon>
        <taxon>Muridae</taxon>
        <taxon>Murinae</taxon>
        <taxon>Mus</taxon>
        <taxon>Mus</taxon>
    </lineage>
</organism>
<sequence length="960" mass="108216">MLLLLLVPLFLRPLGAGGAQTPNVTSEGCQIIHPPWEGGIRYRGLTRDQVKAINFLPVDYEIEYVCRGEREVVGPKVRKCLANGSWTDMDTPSRCVRICSKSYLTLENGKVFLTGGDLPALDGARVDFRCDPDFHLVGSSRSICSQGQWSTPKPHCQVNRTPHSERRAVYIGALFPMSGGWPGGQACQPAVEMALEDVNSRRDILPDYELKLIHHDSKCDPGQATKYLYELLYNDPIKIILMPGCSSVSTLVAEAARMWNLIVLSYGSSSPALSNRQRFPTFFRTHPSATLHNPTRVKLFEKWGWKKIATIQQTTEVFTSTLDDLEERVKEAGIEITFRQSFFSDPAVPVKNLKRQDARIIVGLFYETEARKVFCEVYKERLFGKKYVWFLIGWYADNWFKTYDPSINCTVEEMTEAVEGHITTEIVMLNPANTRSISNMTSQEFVEKLTKRLKRHPEETGGFQEAPLAYDAIWALALALNKTSGGGGRSGVRLEDFNYNNQTITDQIYRAMNSSSFEGVSGHVVFDASGSRMAWTLIEQLQGGSYKKIGYYDSTKDDLSWSKTDKWIGGSPPADQTLVIKTFRFLSQKLFISVSVLSSLGIVLAVVCLSFNIYNSHVRYIQNSQPNLNNLTAVGCSLALAAVFPLGLDGYHIGRSQFPFVCQARLWLLGLGFSLGYGSMFTKIWWVHTVFTKKEEKKEWRKTLEPWKLYATVGLLVGMDILTLAIWQIVDPLHRTIETFAKEEPKEDIDVSILPQLEHCSSKKMNTWLGIFYGYKGLLLLLGIFLAYETKSVSTEKINDHRAVGMAIYNVAVLCLITAPVTMILSSQQDAAFAFASLAIVFSSYITLVVLFVPKMRRLITRGEWQSEAQDTMKTGSSTNNNEEEKSRLLEKENRELEKIIAEKEERVSELRHQLQSRQQIRSRRHPPTPPDPSGGLPRGPSEPPDRLSCDGSRVHLLYK</sequence>